<dbReference type="EC" id="1.1.1.17" evidence="1"/>
<dbReference type="EMBL" id="CP000036">
    <property type="protein sequence ID" value="ABB68079.1"/>
    <property type="molecule type" value="Genomic_DNA"/>
</dbReference>
<dbReference type="RefSeq" id="WP_000645426.1">
    <property type="nucleotide sequence ID" value="NC_007613.1"/>
</dbReference>
<dbReference type="SMR" id="Q31V29"/>
<dbReference type="KEGG" id="sbo:SBO_3598"/>
<dbReference type="HOGENOM" id="CLU_036089_2_0_6"/>
<dbReference type="Proteomes" id="UP000007067">
    <property type="component" value="Chromosome"/>
</dbReference>
<dbReference type="GO" id="GO:0005829">
    <property type="term" value="C:cytosol"/>
    <property type="evidence" value="ECO:0007669"/>
    <property type="project" value="TreeGrafter"/>
</dbReference>
<dbReference type="GO" id="GO:0008926">
    <property type="term" value="F:mannitol-1-phosphate 5-dehydrogenase activity"/>
    <property type="evidence" value="ECO:0007669"/>
    <property type="project" value="UniProtKB-UniRule"/>
</dbReference>
<dbReference type="GO" id="GO:0019592">
    <property type="term" value="P:mannitol catabolic process"/>
    <property type="evidence" value="ECO:0007669"/>
    <property type="project" value="TreeGrafter"/>
</dbReference>
<dbReference type="FunFam" id="1.10.1040.10:FF:000009">
    <property type="entry name" value="Mannitol-1-phosphate 5-dehydrogenase"/>
    <property type="match status" value="1"/>
</dbReference>
<dbReference type="FunFam" id="3.40.50.720:FF:000075">
    <property type="entry name" value="Mannitol-1-phosphate 5-dehydrogenase"/>
    <property type="match status" value="1"/>
</dbReference>
<dbReference type="Gene3D" id="1.10.1040.10">
    <property type="entry name" value="N-(1-d-carboxylethyl)-l-norvaline Dehydrogenase, domain 2"/>
    <property type="match status" value="1"/>
</dbReference>
<dbReference type="Gene3D" id="3.40.50.720">
    <property type="entry name" value="NAD(P)-binding Rossmann-like Domain"/>
    <property type="match status" value="1"/>
</dbReference>
<dbReference type="HAMAP" id="MF_00196">
    <property type="entry name" value="Mannitol_dehydrog"/>
    <property type="match status" value="1"/>
</dbReference>
<dbReference type="InterPro" id="IPR008927">
    <property type="entry name" value="6-PGluconate_DH-like_C_sf"/>
</dbReference>
<dbReference type="InterPro" id="IPR013328">
    <property type="entry name" value="6PGD_dom2"/>
</dbReference>
<dbReference type="InterPro" id="IPR023028">
    <property type="entry name" value="Mannitol_1_phos_5_DH"/>
</dbReference>
<dbReference type="InterPro" id="IPR000669">
    <property type="entry name" value="Mannitol_DH"/>
</dbReference>
<dbReference type="InterPro" id="IPR013118">
    <property type="entry name" value="Mannitol_DH_C"/>
</dbReference>
<dbReference type="InterPro" id="IPR023027">
    <property type="entry name" value="Mannitol_DH_CS"/>
</dbReference>
<dbReference type="InterPro" id="IPR013131">
    <property type="entry name" value="Mannitol_DH_N"/>
</dbReference>
<dbReference type="InterPro" id="IPR036291">
    <property type="entry name" value="NAD(P)-bd_dom_sf"/>
</dbReference>
<dbReference type="NCBIfam" id="NF002646">
    <property type="entry name" value="PRK02318.1-2"/>
    <property type="match status" value="1"/>
</dbReference>
<dbReference type="NCBIfam" id="NF002647">
    <property type="entry name" value="PRK02318.1-3"/>
    <property type="match status" value="1"/>
</dbReference>
<dbReference type="NCBIfam" id="NF002648">
    <property type="entry name" value="PRK02318.1-4"/>
    <property type="match status" value="1"/>
</dbReference>
<dbReference type="NCBIfam" id="NF002650">
    <property type="entry name" value="PRK02318.2-2"/>
    <property type="match status" value="1"/>
</dbReference>
<dbReference type="NCBIfam" id="NF002652">
    <property type="entry name" value="PRK02318.2-5"/>
    <property type="match status" value="1"/>
</dbReference>
<dbReference type="PANTHER" id="PTHR30524:SF0">
    <property type="entry name" value="ALTRONATE OXIDOREDUCTASE-RELATED"/>
    <property type="match status" value="1"/>
</dbReference>
<dbReference type="PANTHER" id="PTHR30524">
    <property type="entry name" value="MANNITOL-1-PHOSPHATE 5-DEHYDROGENASE"/>
    <property type="match status" value="1"/>
</dbReference>
<dbReference type="Pfam" id="PF01232">
    <property type="entry name" value="Mannitol_dh"/>
    <property type="match status" value="1"/>
</dbReference>
<dbReference type="Pfam" id="PF08125">
    <property type="entry name" value="Mannitol_dh_C"/>
    <property type="match status" value="1"/>
</dbReference>
<dbReference type="PRINTS" id="PR00084">
    <property type="entry name" value="MTLDHDRGNASE"/>
</dbReference>
<dbReference type="SUPFAM" id="SSF48179">
    <property type="entry name" value="6-phosphogluconate dehydrogenase C-terminal domain-like"/>
    <property type="match status" value="1"/>
</dbReference>
<dbReference type="SUPFAM" id="SSF51735">
    <property type="entry name" value="NAD(P)-binding Rossmann-fold domains"/>
    <property type="match status" value="1"/>
</dbReference>
<dbReference type="PROSITE" id="PS00974">
    <property type="entry name" value="MANNITOL_DHGENASE"/>
    <property type="match status" value="1"/>
</dbReference>
<keyword id="KW-0007">Acetylation</keyword>
<keyword id="KW-0520">NAD</keyword>
<keyword id="KW-0560">Oxidoreductase</keyword>
<name>MTLD_SHIBS</name>
<organism>
    <name type="scientific">Shigella boydii serotype 4 (strain Sb227)</name>
    <dbReference type="NCBI Taxonomy" id="300268"/>
    <lineage>
        <taxon>Bacteria</taxon>
        <taxon>Pseudomonadati</taxon>
        <taxon>Pseudomonadota</taxon>
        <taxon>Gammaproteobacteria</taxon>
        <taxon>Enterobacterales</taxon>
        <taxon>Enterobacteriaceae</taxon>
        <taxon>Shigella</taxon>
    </lineage>
</organism>
<feature type="chain" id="PRO_1000011809" description="Mannitol-1-phosphate 5-dehydrogenase">
    <location>
        <begin position="1"/>
        <end position="382"/>
    </location>
</feature>
<feature type="binding site" evidence="1">
    <location>
        <begin position="3"/>
        <end position="14"/>
    </location>
    <ligand>
        <name>NAD(+)</name>
        <dbReference type="ChEBI" id="CHEBI:57540"/>
    </ligand>
</feature>
<feature type="modified residue" description="N6-acetyllysine" evidence="1">
    <location>
        <position position="269"/>
    </location>
</feature>
<protein>
    <recommendedName>
        <fullName evidence="1">Mannitol-1-phosphate 5-dehydrogenase</fullName>
        <ecNumber evidence="1">1.1.1.17</ecNumber>
    </recommendedName>
</protein>
<evidence type="ECO:0000255" key="1">
    <source>
        <dbReference type="HAMAP-Rule" id="MF_00196"/>
    </source>
</evidence>
<proteinExistence type="inferred from homology"/>
<comment type="catalytic activity">
    <reaction evidence="1">
        <text>D-mannitol 1-phosphate + NAD(+) = beta-D-fructose 6-phosphate + NADH + H(+)</text>
        <dbReference type="Rhea" id="RHEA:19661"/>
        <dbReference type="ChEBI" id="CHEBI:15378"/>
        <dbReference type="ChEBI" id="CHEBI:57540"/>
        <dbReference type="ChEBI" id="CHEBI:57634"/>
        <dbReference type="ChEBI" id="CHEBI:57945"/>
        <dbReference type="ChEBI" id="CHEBI:61381"/>
        <dbReference type="EC" id="1.1.1.17"/>
    </reaction>
</comment>
<comment type="similarity">
    <text evidence="1">Belongs to the mannitol dehydrogenase family.</text>
</comment>
<accession>Q31V29</accession>
<sequence>MKALHFGAGNIGRGFIGKLLADAGIQLTFADVNQVVLDALNARHSYQVHVVGETEQVDTVSGVNAVSSIGDDVVDLIAQVDLVTTAVGPVVLERIAPAIAKGLVKRKEQGNESPLNIIACENMVRGTTQLKGHVMNALPEDAKAWVEEHVGFVDSAVDRIVPPSASATNDPLEVTVETFSEWIVDKTQFKGALPNIPSMELTDNLMAFVERKLFTLNTGHAITAYLGKLAGHQTIRDAILDEKIRAVVKGAMEESGAVLIKRYGFDADKHAAYIQKILGRFENPYLKDDVERVGRQPLRKLSAGDRLIKPLLGTLEYSLPHKNLIQGIAGAMHFRSEDDPQAQELAALIADKGPQAALAQISGLDANSEVVSEAVTAYKAMQ</sequence>
<reference key="1">
    <citation type="journal article" date="2005" name="Nucleic Acids Res.">
        <title>Genome dynamics and diversity of Shigella species, the etiologic agents of bacillary dysentery.</title>
        <authorList>
            <person name="Yang F."/>
            <person name="Yang J."/>
            <person name="Zhang X."/>
            <person name="Chen L."/>
            <person name="Jiang Y."/>
            <person name="Yan Y."/>
            <person name="Tang X."/>
            <person name="Wang J."/>
            <person name="Xiong Z."/>
            <person name="Dong J."/>
            <person name="Xue Y."/>
            <person name="Zhu Y."/>
            <person name="Xu X."/>
            <person name="Sun L."/>
            <person name="Chen S."/>
            <person name="Nie H."/>
            <person name="Peng J."/>
            <person name="Xu J."/>
            <person name="Wang Y."/>
            <person name="Yuan Z."/>
            <person name="Wen Y."/>
            <person name="Yao Z."/>
            <person name="Shen Y."/>
            <person name="Qiang B."/>
            <person name="Hou Y."/>
            <person name="Yu J."/>
            <person name="Jin Q."/>
        </authorList>
    </citation>
    <scope>NUCLEOTIDE SEQUENCE [LARGE SCALE GENOMIC DNA]</scope>
    <source>
        <strain>Sb227</strain>
    </source>
</reference>
<gene>
    <name evidence="1" type="primary">mtlD</name>
    <name type="ordered locus">SBO_3598</name>
</gene>